<evidence type="ECO:0000255" key="1">
    <source>
        <dbReference type="HAMAP-Rule" id="MF_00558"/>
    </source>
</evidence>
<name>SUCC_RICRS</name>
<dbReference type="EC" id="6.2.1.5" evidence="1"/>
<dbReference type="EMBL" id="CP000848">
    <property type="protein sequence ID" value="ABV76204.1"/>
    <property type="molecule type" value="Genomic_DNA"/>
</dbReference>
<dbReference type="RefSeq" id="WP_012150790.1">
    <property type="nucleotide sequence ID" value="NZ_CP121767.1"/>
</dbReference>
<dbReference type="SMR" id="A8GS29"/>
<dbReference type="GeneID" id="79937343"/>
<dbReference type="KEGG" id="rri:A1G_03365"/>
<dbReference type="HOGENOM" id="CLU_037430_0_2_5"/>
<dbReference type="UniPathway" id="UPA00223">
    <property type="reaction ID" value="UER00999"/>
</dbReference>
<dbReference type="Proteomes" id="UP000006832">
    <property type="component" value="Chromosome"/>
</dbReference>
<dbReference type="GO" id="GO:0005829">
    <property type="term" value="C:cytosol"/>
    <property type="evidence" value="ECO:0007669"/>
    <property type="project" value="TreeGrafter"/>
</dbReference>
<dbReference type="GO" id="GO:0042709">
    <property type="term" value="C:succinate-CoA ligase complex"/>
    <property type="evidence" value="ECO:0007669"/>
    <property type="project" value="TreeGrafter"/>
</dbReference>
<dbReference type="GO" id="GO:0005524">
    <property type="term" value="F:ATP binding"/>
    <property type="evidence" value="ECO:0007669"/>
    <property type="project" value="UniProtKB-UniRule"/>
</dbReference>
<dbReference type="GO" id="GO:0000287">
    <property type="term" value="F:magnesium ion binding"/>
    <property type="evidence" value="ECO:0007669"/>
    <property type="project" value="UniProtKB-UniRule"/>
</dbReference>
<dbReference type="GO" id="GO:0004775">
    <property type="term" value="F:succinate-CoA ligase (ADP-forming) activity"/>
    <property type="evidence" value="ECO:0007669"/>
    <property type="project" value="UniProtKB-UniRule"/>
</dbReference>
<dbReference type="GO" id="GO:0004776">
    <property type="term" value="F:succinate-CoA ligase (GDP-forming) activity"/>
    <property type="evidence" value="ECO:0007669"/>
    <property type="project" value="RHEA"/>
</dbReference>
<dbReference type="GO" id="GO:0006104">
    <property type="term" value="P:succinyl-CoA metabolic process"/>
    <property type="evidence" value="ECO:0007669"/>
    <property type="project" value="TreeGrafter"/>
</dbReference>
<dbReference type="GO" id="GO:0006099">
    <property type="term" value="P:tricarboxylic acid cycle"/>
    <property type="evidence" value="ECO:0007669"/>
    <property type="project" value="UniProtKB-UniRule"/>
</dbReference>
<dbReference type="FunFam" id="3.30.1490.20:FF:000002">
    <property type="entry name" value="Succinate--CoA ligase [ADP-forming] subunit beta"/>
    <property type="match status" value="1"/>
</dbReference>
<dbReference type="FunFam" id="3.30.470.20:FF:000002">
    <property type="entry name" value="Succinate--CoA ligase [ADP-forming] subunit beta"/>
    <property type="match status" value="1"/>
</dbReference>
<dbReference type="FunFam" id="3.40.50.261:FF:000001">
    <property type="entry name" value="Succinate--CoA ligase [ADP-forming] subunit beta"/>
    <property type="match status" value="1"/>
</dbReference>
<dbReference type="Gene3D" id="3.30.1490.20">
    <property type="entry name" value="ATP-grasp fold, A domain"/>
    <property type="match status" value="1"/>
</dbReference>
<dbReference type="Gene3D" id="3.30.470.20">
    <property type="entry name" value="ATP-grasp fold, B domain"/>
    <property type="match status" value="1"/>
</dbReference>
<dbReference type="Gene3D" id="3.40.50.261">
    <property type="entry name" value="Succinyl-CoA synthetase domains"/>
    <property type="match status" value="1"/>
</dbReference>
<dbReference type="HAMAP" id="MF_00558">
    <property type="entry name" value="Succ_CoA_beta"/>
    <property type="match status" value="1"/>
</dbReference>
<dbReference type="InterPro" id="IPR011761">
    <property type="entry name" value="ATP-grasp"/>
</dbReference>
<dbReference type="InterPro" id="IPR013650">
    <property type="entry name" value="ATP-grasp_succ-CoA_synth-type"/>
</dbReference>
<dbReference type="InterPro" id="IPR013815">
    <property type="entry name" value="ATP_grasp_subdomain_1"/>
</dbReference>
<dbReference type="InterPro" id="IPR017866">
    <property type="entry name" value="Succ-CoA_synthase_bsu_CS"/>
</dbReference>
<dbReference type="InterPro" id="IPR005811">
    <property type="entry name" value="SUCC_ACL_C"/>
</dbReference>
<dbReference type="InterPro" id="IPR005809">
    <property type="entry name" value="Succ_CoA_ligase-like_bsu"/>
</dbReference>
<dbReference type="InterPro" id="IPR016102">
    <property type="entry name" value="Succinyl-CoA_synth-like"/>
</dbReference>
<dbReference type="NCBIfam" id="NF001913">
    <property type="entry name" value="PRK00696.1"/>
    <property type="match status" value="1"/>
</dbReference>
<dbReference type="NCBIfam" id="TIGR01016">
    <property type="entry name" value="sucCoAbeta"/>
    <property type="match status" value="1"/>
</dbReference>
<dbReference type="PANTHER" id="PTHR11815:SF10">
    <property type="entry name" value="SUCCINATE--COA LIGASE [GDP-FORMING] SUBUNIT BETA, MITOCHONDRIAL"/>
    <property type="match status" value="1"/>
</dbReference>
<dbReference type="PANTHER" id="PTHR11815">
    <property type="entry name" value="SUCCINYL-COA SYNTHETASE BETA CHAIN"/>
    <property type="match status" value="1"/>
</dbReference>
<dbReference type="Pfam" id="PF08442">
    <property type="entry name" value="ATP-grasp_2"/>
    <property type="match status" value="1"/>
</dbReference>
<dbReference type="Pfam" id="PF00549">
    <property type="entry name" value="Ligase_CoA"/>
    <property type="match status" value="1"/>
</dbReference>
<dbReference type="PIRSF" id="PIRSF001554">
    <property type="entry name" value="SucCS_beta"/>
    <property type="match status" value="1"/>
</dbReference>
<dbReference type="SUPFAM" id="SSF56059">
    <property type="entry name" value="Glutathione synthetase ATP-binding domain-like"/>
    <property type="match status" value="1"/>
</dbReference>
<dbReference type="SUPFAM" id="SSF52210">
    <property type="entry name" value="Succinyl-CoA synthetase domains"/>
    <property type="match status" value="1"/>
</dbReference>
<dbReference type="PROSITE" id="PS50975">
    <property type="entry name" value="ATP_GRASP"/>
    <property type="match status" value="1"/>
</dbReference>
<dbReference type="PROSITE" id="PS01217">
    <property type="entry name" value="SUCCINYL_COA_LIG_3"/>
    <property type="match status" value="1"/>
</dbReference>
<sequence length="386" mass="41827">MNIHEYQAKEILRKYGVPTSTGLVVTKTEKINETIDKLNTEVYVVKAQIHAGGRGKAGGVKVVKSKEEAKKVAHDMFGINLVTHQTGPQGQKVNRLYIESGCEILKEYYFSIVFDRSASCITFIASTEGGVDIEEVAEKTPEKIIKFSVDPATGLQDFHMRGIAYELGFKDNQAKQMKEIVKSVYNAFIETDAAQIEINPLIVNSDGNLLALDAKITFDDNGLLRHPNITAMRDHDEEDPLETRAANAGLSYVKMDGNIGCMVNGAGLAMATMDIIKLYGASPANFLDVGGGADRERVKEALKIILSDKAVQGILVNIFGGIMRCDIIAEGIIAAAKDIGIKVPLVVRLAGTNVEKGKEILSNSGLEIIPAHDLADAANKIVEAIR</sequence>
<organism>
    <name type="scientific">Rickettsia rickettsii (strain Sheila Smith)</name>
    <dbReference type="NCBI Taxonomy" id="392021"/>
    <lineage>
        <taxon>Bacteria</taxon>
        <taxon>Pseudomonadati</taxon>
        <taxon>Pseudomonadota</taxon>
        <taxon>Alphaproteobacteria</taxon>
        <taxon>Rickettsiales</taxon>
        <taxon>Rickettsiaceae</taxon>
        <taxon>Rickettsieae</taxon>
        <taxon>Rickettsia</taxon>
        <taxon>spotted fever group</taxon>
    </lineage>
</organism>
<protein>
    <recommendedName>
        <fullName evidence="1">Succinate--CoA ligase [ADP-forming] subunit beta</fullName>
        <ecNumber evidence="1">6.2.1.5</ecNumber>
    </recommendedName>
    <alternativeName>
        <fullName evidence="1">Succinyl-CoA synthetase subunit beta</fullName>
        <shortName evidence="1">SCS-beta</shortName>
    </alternativeName>
</protein>
<keyword id="KW-0067">ATP-binding</keyword>
<keyword id="KW-0436">Ligase</keyword>
<keyword id="KW-0460">Magnesium</keyword>
<keyword id="KW-0479">Metal-binding</keyword>
<keyword id="KW-0547">Nucleotide-binding</keyword>
<keyword id="KW-0816">Tricarboxylic acid cycle</keyword>
<accession>A8GS29</accession>
<gene>
    <name evidence="1" type="primary">sucC</name>
    <name type="ordered locus">A1G_03365</name>
</gene>
<proteinExistence type="inferred from homology"/>
<feature type="chain" id="PRO_1000082204" description="Succinate--CoA ligase [ADP-forming] subunit beta">
    <location>
        <begin position="1"/>
        <end position="386"/>
    </location>
</feature>
<feature type="domain" description="ATP-grasp" evidence="1">
    <location>
        <begin position="9"/>
        <end position="244"/>
    </location>
</feature>
<feature type="binding site" evidence="1">
    <location>
        <position position="46"/>
    </location>
    <ligand>
        <name>ATP</name>
        <dbReference type="ChEBI" id="CHEBI:30616"/>
    </ligand>
</feature>
<feature type="binding site" evidence="1">
    <location>
        <begin position="53"/>
        <end position="55"/>
    </location>
    <ligand>
        <name>ATP</name>
        <dbReference type="ChEBI" id="CHEBI:30616"/>
    </ligand>
</feature>
<feature type="binding site" evidence="1">
    <location>
        <position position="99"/>
    </location>
    <ligand>
        <name>ATP</name>
        <dbReference type="ChEBI" id="CHEBI:30616"/>
    </ligand>
</feature>
<feature type="binding site" evidence="1">
    <location>
        <position position="102"/>
    </location>
    <ligand>
        <name>ATP</name>
        <dbReference type="ChEBI" id="CHEBI:30616"/>
    </ligand>
</feature>
<feature type="binding site" evidence="1">
    <location>
        <position position="107"/>
    </location>
    <ligand>
        <name>ATP</name>
        <dbReference type="ChEBI" id="CHEBI:30616"/>
    </ligand>
</feature>
<feature type="binding site" evidence="1">
    <location>
        <position position="199"/>
    </location>
    <ligand>
        <name>Mg(2+)</name>
        <dbReference type="ChEBI" id="CHEBI:18420"/>
    </ligand>
</feature>
<feature type="binding site" evidence="1">
    <location>
        <position position="213"/>
    </location>
    <ligand>
        <name>Mg(2+)</name>
        <dbReference type="ChEBI" id="CHEBI:18420"/>
    </ligand>
</feature>
<feature type="binding site" evidence="1">
    <location>
        <position position="264"/>
    </location>
    <ligand>
        <name>substrate</name>
        <note>ligand shared with subunit alpha</note>
    </ligand>
</feature>
<feature type="binding site" evidence="1">
    <location>
        <begin position="321"/>
        <end position="323"/>
    </location>
    <ligand>
        <name>substrate</name>
        <note>ligand shared with subunit alpha</note>
    </ligand>
</feature>
<comment type="function">
    <text evidence="1">Succinyl-CoA synthetase functions in the citric acid cycle (TCA), coupling the hydrolysis of succinyl-CoA to the synthesis of either ATP or GTP and thus represents the only step of substrate-level phosphorylation in the TCA. The beta subunit provides nucleotide specificity of the enzyme and binds the substrate succinate, while the binding sites for coenzyme A and phosphate are found in the alpha subunit.</text>
</comment>
<comment type="catalytic activity">
    <reaction evidence="1">
        <text>succinate + ATP + CoA = succinyl-CoA + ADP + phosphate</text>
        <dbReference type="Rhea" id="RHEA:17661"/>
        <dbReference type="ChEBI" id="CHEBI:30031"/>
        <dbReference type="ChEBI" id="CHEBI:30616"/>
        <dbReference type="ChEBI" id="CHEBI:43474"/>
        <dbReference type="ChEBI" id="CHEBI:57287"/>
        <dbReference type="ChEBI" id="CHEBI:57292"/>
        <dbReference type="ChEBI" id="CHEBI:456216"/>
        <dbReference type="EC" id="6.2.1.5"/>
    </reaction>
    <physiologicalReaction direction="right-to-left" evidence="1">
        <dbReference type="Rhea" id="RHEA:17663"/>
    </physiologicalReaction>
</comment>
<comment type="catalytic activity">
    <reaction evidence="1">
        <text>GTP + succinate + CoA = succinyl-CoA + GDP + phosphate</text>
        <dbReference type="Rhea" id="RHEA:22120"/>
        <dbReference type="ChEBI" id="CHEBI:30031"/>
        <dbReference type="ChEBI" id="CHEBI:37565"/>
        <dbReference type="ChEBI" id="CHEBI:43474"/>
        <dbReference type="ChEBI" id="CHEBI:57287"/>
        <dbReference type="ChEBI" id="CHEBI:57292"/>
        <dbReference type="ChEBI" id="CHEBI:58189"/>
    </reaction>
    <physiologicalReaction direction="right-to-left" evidence="1">
        <dbReference type="Rhea" id="RHEA:22122"/>
    </physiologicalReaction>
</comment>
<comment type="cofactor">
    <cofactor evidence="1">
        <name>Mg(2+)</name>
        <dbReference type="ChEBI" id="CHEBI:18420"/>
    </cofactor>
    <text evidence="1">Binds 1 Mg(2+) ion per subunit.</text>
</comment>
<comment type="pathway">
    <text evidence="1">Carbohydrate metabolism; tricarboxylic acid cycle; succinate from succinyl-CoA (ligase route): step 1/1.</text>
</comment>
<comment type="subunit">
    <text evidence="1">Heterotetramer of two alpha and two beta subunits.</text>
</comment>
<comment type="similarity">
    <text evidence="1">Belongs to the succinate/malate CoA ligase beta subunit family.</text>
</comment>
<reference key="1">
    <citation type="submission" date="2007-09" db="EMBL/GenBank/DDBJ databases">
        <title>Complete genome sequence of Rickettsia rickettsii.</title>
        <authorList>
            <person name="Madan A."/>
            <person name="Fahey J."/>
            <person name="Helton E."/>
            <person name="Ketteman M."/>
            <person name="Madan A."/>
            <person name="Rodrigues S."/>
            <person name="Sanchez A."/>
            <person name="Dasch G."/>
            <person name="Eremeeva M."/>
        </authorList>
    </citation>
    <scope>NUCLEOTIDE SEQUENCE [LARGE SCALE GENOMIC DNA]</scope>
    <source>
        <strain>Sheila Smith</strain>
    </source>
</reference>